<gene>
    <name type="primary">CYP734A5</name>
    <name type="ordered locus">Os07g0647200</name>
    <name type="ordered locus">LOC_Os07g45290</name>
    <name type="ORF">OJ1316_A04.108</name>
    <name type="ORF">OsJ_25362</name>
    <name type="ORF">P0503D09.125</name>
</gene>
<evidence type="ECO:0000250" key="1"/>
<evidence type="ECO:0000255" key="2"/>
<evidence type="ECO:0000269" key="3">
    <source>
    </source>
</evidence>
<evidence type="ECO:0000305" key="4"/>
<dbReference type="EC" id="1.14.-.-"/>
<dbReference type="EMBL" id="AB488668">
    <property type="protein sequence ID" value="BAH23801.1"/>
    <property type="status" value="ALT_SEQ"/>
    <property type="molecule type" value="mRNA"/>
</dbReference>
<dbReference type="EMBL" id="AP003822">
    <property type="protein sequence ID" value="BAC06993.1"/>
    <property type="molecule type" value="Genomic_DNA"/>
</dbReference>
<dbReference type="EMBL" id="AP005455">
    <property type="protein sequence ID" value="BAD31455.1"/>
    <property type="molecule type" value="Genomic_DNA"/>
</dbReference>
<dbReference type="EMBL" id="AP008213">
    <property type="protein sequence ID" value="BAF22381.1"/>
    <property type="molecule type" value="Genomic_DNA"/>
</dbReference>
<dbReference type="EMBL" id="AP014963">
    <property type="status" value="NOT_ANNOTATED_CDS"/>
    <property type="molecule type" value="Genomic_DNA"/>
</dbReference>
<dbReference type="EMBL" id="CM000144">
    <property type="protein sequence ID" value="EAZ40884.1"/>
    <property type="molecule type" value="Genomic_DNA"/>
</dbReference>
<dbReference type="RefSeq" id="XP_015648047.1">
    <property type="nucleotide sequence ID" value="XM_015792561.1"/>
</dbReference>
<dbReference type="SMR" id="Q8LIF2"/>
<dbReference type="FunCoup" id="Q8LIF2">
    <property type="interactions" value="760"/>
</dbReference>
<dbReference type="STRING" id="39947.Q8LIF2"/>
<dbReference type="PaxDb" id="39947-Q8LIF2"/>
<dbReference type="KEGG" id="dosa:Os07g0647200"/>
<dbReference type="eggNOG" id="KOG0157">
    <property type="taxonomic scope" value="Eukaryota"/>
</dbReference>
<dbReference type="InParanoid" id="Q8LIF2"/>
<dbReference type="OrthoDB" id="1470350at2759"/>
<dbReference type="Proteomes" id="UP000000763">
    <property type="component" value="Chromosome 7"/>
</dbReference>
<dbReference type="Proteomes" id="UP000007752">
    <property type="component" value="Chromosome 7"/>
</dbReference>
<dbReference type="Proteomes" id="UP000059680">
    <property type="component" value="Chromosome 7"/>
</dbReference>
<dbReference type="GO" id="GO:0016020">
    <property type="term" value="C:membrane"/>
    <property type="evidence" value="ECO:0007669"/>
    <property type="project" value="UniProtKB-SubCell"/>
</dbReference>
<dbReference type="GO" id="GO:0020037">
    <property type="term" value="F:heme binding"/>
    <property type="evidence" value="ECO:0007669"/>
    <property type="project" value="InterPro"/>
</dbReference>
<dbReference type="GO" id="GO:0005506">
    <property type="term" value="F:iron ion binding"/>
    <property type="evidence" value="ECO:0007669"/>
    <property type="project" value="InterPro"/>
</dbReference>
<dbReference type="GO" id="GO:0004497">
    <property type="term" value="F:monooxygenase activity"/>
    <property type="evidence" value="ECO:0000318"/>
    <property type="project" value="GO_Central"/>
</dbReference>
<dbReference type="GO" id="GO:0016705">
    <property type="term" value="F:oxidoreductase activity, acting on paired donors, with incorporation or reduction of molecular oxygen"/>
    <property type="evidence" value="ECO:0007669"/>
    <property type="project" value="InterPro"/>
</dbReference>
<dbReference type="GO" id="GO:0010268">
    <property type="term" value="P:brassinosteroid homeostasis"/>
    <property type="evidence" value="ECO:0000318"/>
    <property type="project" value="GO_Central"/>
</dbReference>
<dbReference type="GO" id="GO:0016131">
    <property type="term" value="P:brassinosteroid metabolic process"/>
    <property type="evidence" value="ECO:0000318"/>
    <property type="project" value="GO_Central"/>
</dbReference>
<dbReference type="CDD" id="cd20639">
    <property type="entry name" value="CYP734"/>
    <property type="match status" value="1"/>
</dbReference>
<dbReference type="FunFam" id="1.10.630.10:FF:000029">
    <property type="entry name" value="Cytochrome P450 734A1"/>
    <property type="match status" value="1"/>
</dbReference>
<dbReference type="Gene3D" id="1.10.630.10">
    <property type="entry name" value="Cytochrome P450"/>
    <property type="match status" value="1"/>
</dbReference>
<dbReference type="InterPro" id="IPR001128">
    <property type="entry name" value="Cyt_P450"/>
</dbReference>
<dbReference type="InterPro" id="IPR017972">
    <property type="entry name" value="Cyt_P450_CS"/>
</dbReference>
<dbReference type="InterPro" id="IPR002401">
    <property type="entry name" value="Cyt_P450_E_grp-I"/>
</dbReference>
<dbReference type="InterPro" id="IPR036396">
    <property type="entry name" value="Cyt_P450_sf"/>
</dbReference>
<dbReference type="InterPro" id="IPR050665">
    <property type="entry name" value="Cytochrome_P450_Monooxygen"/>
</dbReference>
<dbReference type="PANTHER" id="PTHR24282:SF41">
    <property type="entry name" value="CYTOCHROME P450 734A5"/>
    <property type="match status" value="1"/>
</dbReference>
<dbReference type="PANTHER" id="PTHR24282">
    <property type="entry name" value="CYTOCHROME P450 FAMILY MEMBER"/>
    <property type="match status" value="1"/>
</dbReference>
<dbReference type="Pfam" id="PF00067">
    <property type="entry name" value="p450"/>
    <property type="match status" value="1"/>
</dbReference>
<dbReference type="PRINTS" id="PR00463">
    <property type="entry name" value="EP450I"/>
</dbReference>
<dbReference type="PRINTS" id="PR00385">
    <property type="entry name" value="P450"/>
</dbReference>
<dbReference type="SUPFAM" id="SSF48264">
    <property type="entry name" value="Cytochrome P450"/>
    <property type="match status" value="1"/>
</dbReference>
<dbReference type="PROSITE" id="PS00086">
    <property type="entry name" value="CYTOCHROME_P450"/>
    <property type="match status" value="1"/>
</dbReference>
<feature type="chain" id="PRO_0000411203" description="Cytochrome P450 734A5">
    <location>
        <begin position="1"/>
        <end position="537"/>
    </location>
</feature>
<feature type="transmembrane region" description="Helical" evidence="2">
    <location>
        <begin position="13"/>
        <end position="33"/>
    </location>
</feature>
<feature type="binding site" description="axial binding residue" evidence="1">
    <location>
        <position position="480"/>
    </location>
    <ligand>
        <name>heme</name>
        <dbReference type="ChEBI" id="CHEBI:30413"/>
    </ligand>
    <ligandPart>
        <name>Fe</name>
        <dbReference type="ChEBI" id="CHEBI:18248"/>
    </ligandPart>
</feature>
<comment type="function">
    <text evidence="1">Cytochrome P450 probably involved in brassinosteroids (BRs) inactivation and regulation of BRs homeostasis.</text>
</comment>
<comment type="cofactor">
    <cofactor evidence="1">
        <name>heme</name>
        <dbReference type="ChEBI" id="CHEBI:30413"/>
    </cofactor>
</comment>
<comment type="subcellular location">
    <subcellularLocation>
        <location evidence="4">Membrane</location>
        <topology evidence="4">Single-pass membrane protein</topology>
    </subcellularLocation>
</comment>
<comment type="tissue specificity">
    <text evidence="3">Exclusively expressed in roots.</text>
</comment>
<comment type="induction">
    <text evidence="3">By brassinolide and dark treatment.</text>
</comment>
<comment type="similarity">
    <text evidence="4">Belongs to the cytochrome P450 family.</text>
</comment>
<comment type="sequence caution" evidence="4">
    <conflict type="miscellaneous discrepancy">
        <sequence resource="EMBL-CDS" id="BAH23801"/>
    </conflict>
    <text>Sequencing errors.</text>
</comment>
<keyword id="KW-0349">Heme</keyword>
<keyword id="KW-0408">Iron</keyword>
<keyword id="KW-0472">Membrane</keyword>
<keyword id="KW-0479">Metal-binding</keyword>
<keyword id="KW-0503">Monooxygenase</keyword>
<keyword id="KW-0560">Oxidoreductase</keyword>
<keyword id="KW-1185">Reference proteome</keyword>
<keyword id="KW-0812">Transmembrane</keyword>
<keyword id="KW-1133">Transmembrane helix</keyword>
<name>C7345_ORYSJ</name>
<organism>
    <name type="scientific">Oryza sativa subsp. japonica</name>
    <name type="common">Rice</name>
    <dbReference type="NCBI Taxonomy" id="39947"/>
    <lineage>
        <taxon>Eukaryota</taxon>
        <taxon>Viridiplantae</taxon>
        <taxon>Streptophyta</taxon>
        <taxon>Embryophyta</taxon>
        <taxon>Tracheophyta</taxon>
        <taxon>Spermatophyta</taxon>
        <taxon>Magnoliopsida</taxon>
        <taxon>Liliopsida</taxon>
        <taxon>Poales</taxon>
        <taxon>Poaceae</taxon>
        <taxon>BOP clade</taxon>
        <taxon>Oryzoideae</taxon>
        <taxon>Oryzeae</taxon>
        <taxon>Oryzinae</taxon>
        <taxon>Oryza</taxon>
        <taxon>Oryza sativa</taxon>
    </lineage>
</organism>
<reference key="1">
    <citation type="journal article" date="2011" name="Plant J.">
        <title>Rice CYP734As function as multisubstrate and multifunctional enzymes in brassinosteroid catabolism.</title>
        <authorList>
            <person name="Sakamoto T."/>
            <person name="Kawabe A."/>
            <person name="Tokida-Segawa A."/>
            <person name="Shimizu B.I."/>
            <person name="Takatsuto S."/>
            <person name="Shimada Y."/>
            <person name="Fujioka S."/>
            <person name="Mizutani M."/>
        </authorList>
    </citation>
    <scope>NUCLEOTIDE SEQUENCE [MRNA]</scope>
    <scope>TISSUE SPECIFICITY</scope>
    <scope>INDUCTION</scope>
    <source>
        <strain>cv. Nipponbare</strain>
    </source>
</reference>
<reference key="2">
    <citation type="journal article" date="2005" name="Nature">
        <title>The map-based sequence of the rice genome.</title>
        <authorList>
            <consortium name="International rice genome sequencing project (IRGSP)"/>
        </authorList>
    </citation>
    <scope>NUCLEOTIDE SEQUENCE [LARGE SCALE GENOMIC DNA]</scope>
    <source>
        <strain>cv. Nipponbare</strain>
    </source>
</reference>
<reference key="3">
    <citation type="journal article" date="2008" name="Nucleic Acids Res.">
        <title>The rice annotation project database (RAP-DB): 2008 update.</title>
        <authorList>
            <consortium name="The rice annotation project (RAP)"/>
        </authorList>
    </citation>
    <scope>GENOME REANNOTATION</scope>
    <source>
        <strain>cv. Nipponbare</strain>
    </source>
</reference>
<reference key="4">
    <citation type="journal article" date="2013" name="Rice">
        <title>Improvement of the Oryza sativa Nipponbare reference genome using next generation sequence and optical map data.</title>
        <authorList>
            <person name="Kawahara Y."/>
            <person name="de la Bastide M."/>
            <person name="Hamilton J.P."/>
            <person name="Kanamori H."/>
            <person name="McCombie W.R."/>
            <person name="Ouyang S."/>
            <person name="Schwartz D.C."/>
            <person name="Tanaka T."/>
            <person name="Wu J."/>
            <person name="Zhou S."/>
            <person name="Childs K.L."/>
            <person name="Davidson R.M."/>
            <person name="Lin H."/>
            <person name="Quesada-Ocampo L."/>
            <person name="Vaillancourt B."/>
            <person name="Sakai H."/>
            <person name="Lee S.S."/>
            <person name="Kim J."/>
            <person name="Numa H."/>
            <person name="Itoh T."/>
            <person name="Buell C.R."/>
            <person name="Matsumoto T."/>
        </authorList>
    </citation>
    <scope>GENOME REANNOTATION</scope>
    <source>
        <strain>cv. Nipponbare</strain>
    </source>
</reference>
<reference key="5">
    <citation type="journal article" date="2005" name="PLoS Biol.">
        <title>The genomes of Oryza sativa: a history of duplications.</title>
        <authorList>
            <person name="Yu J."/>
            <person name="Wang J."/>
            <person name="Lin W."/>
            <person name="Li S."/>
            <person name="Li H."/>
            <person name="Zhou J."/>
            <person name="Ni P."/>
            <person name="Dong W."/>
            <person name="Hu S."/>
            <person name="Zeng C."/>
            <person name="Zhang J."/>
            <person name="Zhang Y."/>
            <person name="Li R."/>
            <person name="Xu Z."/>
            <person name="Li S."/>
            <person name="Li X."/>
            <person name="Zheng H."/>
            <person name="Cong L."/>
            <person name="Lin L."/>
            <person name="Yin J."/>
            <person name="Geng J."/>
            <person name="Li G."/>
            <person name="Shi J."/>
            <person name="Liu J."/>
            <person name="Lv H."/>
            <person name="Li J."/>
            <person name="Wang J."/>
            <person name="Deng Y."/>
            <person name="Ran L."/>
            <person name="Shi X."/>
            <person name="Wang X."/>
            <person name="Wu Q."/>
            <person name="Li C."/>
            <person name="Ren X."/>
            <person name="Wang J."/>
            <person name="Wang X."/>
            <person name="Li D."/>
            <person name="Liu D."/>
            <person name="Zhang X."/>
            <person name="Ji Z."/>
            <person name="Zhao W."/>
            <person name="Sun Y."/>
            <person name="Zhang Z."/>
            <person name="Bao J."/>
            <person name="Han Y."/>
            <person name="Dong L."/>
            <person name="Ji J."/>
            <person name="Chen P."/>
            <person name="Wu S."/>
            <person name="Liu J."/>
            <person name="Xiao Y."/>
            <person name="Bu D."/>
            <person name="Tan J."/>
            <person name="Yang L."/>
            <person name="Ye C."/>
            <person name="Zhang J."/>
            <person name="Xu J."/>
            <person name="Zhou Y."/>
            <person name="Yu Y."/>
            <person name="Zhang B."/>
            <person name="Zhuang S."/>
            <person name="Wei H."/>
            <person name="Liu B."/>
            <person name="Lei M."/>
            <person name="Yu H."/>
            <person name="Li Y."/>
            <person name="Xu H."/>
            <person name="Wei S."/>
            <person name="He X."/>
            <person name="Fang L."/>
            <person name="Zhang Z."/>
            <person name="Zhang Y."/>
            <person name="Huang X."/>
            <person name="Su Z."/>
            <person name="Tong W."/>
            <person name="Li J."/>
            <person name="Tong Z."/>
            <person name="Li S."/>
            <person name="Ye J."/>
            <person name="Wang L."/>
            <person name="Fang L."/>
            <person name="Lei T."/>
            <person name="Chen C.-S."/>
            <person name="Chen H.-C."/>
            <person name="Xu Z."/>
            <person name="Li H."/>
            <person name="Huang H."/>
            <person name="Zhang F."/>
            <person name="Xu H."/>
            <person name="Li N."/>
            <person name="Zhao C."/>
            <person name="Li S."/>
            <person name="Dong L."/>
            <person name="Huang Y."/>
            <person name="Li L."/>
            <person name="Xi Y."/>
            <person name="Qi Q."/>
            <person name="Li W."/>
            <person name="Zhang B."/>
            <person name="Hu W."/>
            <person name="Zhang Y."/>
            <person name="Tian X."/>
            <person name="Jiao Y."/>
            <person name="Liang X."/>
            <person name="Jin J."/>
            <person name="Gao L."/>
            <person name="Zheng W."/>
            <person name="Hao B."/>
            <person name="Liu S.-M."/>
            <person name="Wang W."/>
            <person name="Yuan L."/>
            <person name="Cao M."/>
            <person name="McDermott J."/>
            <person name="Samudrala R."/>
            <person name="Wang J."/>
            <person name="Wong G.K.-S."/>
            <person name="Yang H."/>
        </authorList>
    </citation>
    <scope>NUCLEOTIDE SEQUENCE [LARGE SCALE GENOMIC DNA]</scope>
    <source>
        <strain>cv. Nipponbare</strain>
    </source>
</reference>
<accession>Q8LIF2</accession>
<accession>B9X286</accession>
<proteinExistence type="evidence at transcript level"/>
<sequence length="537" mass="59910">MWSSWAWTWSWSGAAAVAVAAAAAWVAVYAAAARAAEALWWRPRRVERHFAAQGVRGPGYRFFVGSSIELVRLMVDAASRPMEPPTSHDILPRVLPFYHHWRKLYGPMHLIWFGRTPRLVVSEPELIREVLLTRADHFDRYEAHPMICQFEGYGLSNLHGERWARRRRVLTPAFHTENLRMIAPFVAGTVTRMLDELAERARAGGAGEAEVDVAEWFQRVPQEAITFAAFGRRNYDDGAAVFRLQDELAGYATEAHSKVYIPGYRFLPTRKNRRVWQLDREIRSHLAKFVTGLQSCSSSHGDDADDGGDGGGGMREFMSFMAPAMTAGEIIEESKNFFFAGKETLSNLLTWTTVALAMHPEWQERARREVVAVCGRGDLPTKDHLPKLKTLGMILNETLRLYPPAVAMIRTAKEDVELGGCVVPAGTEVMIPIMAVHHDAAAWGDDAAEFNPARFAADDDGGRRRHPMAFMPFGGGARVCIGQNMALMEAKVALAVVLRRFEFRLSPAYVHAPRVLMILSPQFGAPVIFRPLTSAAA</sequence>
<protein>
    <recommendedName>
        <fullName>Cytochrome P450 734A5</fullName>
        <ecNumber>1.14.-.-</ecNumber>
    </recommendedName>
</protein>